<evidence type="ECO:0000255" key="1">
    <source>
        <dbReference type="HAMAP-Rule" id="MF_00659"/>
    </source>
</evidence>
<accession>B1IYH7</accession>
<sequence length="87" mass="9827">MKTKLNELLEFPTPFTYKVMGQALPELVDQVVEVVQRHAPGDYTPTVKPSSKGNYHSVSITINATHIEQVETLYEELGKIDIVRMVL</sequence>
<feature type="chain" id="PRO_1000082825" description="UPF0250 protein YbeD">
    <location>
        <begin position="1"/>
        <end position="87"/>
    </location>
</feature>
<dbReference type="EMBL" id="CP000946">
    <property type="protein sequence ID" value="ACA78639.1"/>
    <property type="molecule type" value="Genomic_DNA"/>
</dbReference>
<dbReference type="RefSeq" id="WP_000850550.1">
    <property type="nucleotide sequence ID" value="NZ_MTFT01000005.1"/>
</dbReference>
<dbReference type="SMR" id="B1IYH7"/>
<dbReference type="GeneID" id="93776851"/>
<dbReference type="KEGG" id="ecl:EcolC_3014"/>
<dbReference type="HOGENOM" id="CLU_161438_2_1_6"/>
<dbReference type="GO" id="GO:0005829">
    <property type="term" value="C:cytosol"/>
    <property type="evidence" value="ECO:0007669"/>
    <property type="project" value="TreeGrafter"/>
</dbReference>
<dbReference type="FunFam" id="3.30.70.260:FF:000002">
    <property type="entry name" value="UPF0250 protein YbeD"/>
    <property type="match status" value="1"/>
</dbReference>
<dbReference type="Gene3D" id="3.30.70.260">
    <property type="match status" value="1"/>
</dbReference>
<dbReference type="HAMAP" id="MF_00659">
    <property type="entry name" value="UPF0250"/>
    <property type="match status" value="1"/>
</dbReference>
<dbReference type="InterPro" id="IPR007454">
    <property type="entry name" value="UPF0250_YbeD-like"/>
</dbReference>
<dbReference type="InterPro" id="IPR027471">
    <property type="entry name" value="YbeD-like_sf"/>
</dbReference>
<dbReference type="NCBIfam" id="NF003447">
    <property type="entry name" value="PRK04998.1"/>
    <property type="match status" value="1"/>
</dbReference>
<dbReference type="PANTHER" id="PTHR38036">
    <property type="entry name" value="UPF0250 PROTEIN YBED"/>
    <property type="match status" value="1"/>
</dbReference>
<dbReference type="PANTHER" id="PTHR38036:SF1">
    <property type="entry name" value="UPF0250 PROTEIN YBED"/>
    <property type="match status" value="1"/>
</dbReference>
<dbReference type="Pfam" id="PF04359">
    <property type="entry name" value="DUF493"/>
    <property type="match status" value="1"/>
</dbReference>
<dbReference type="SUPFAM" id="SSF117991">
    <property type="entry name" value="YbeD/HP0495-like"/>
    <property type="match status" value="1"/>
</dbReference>
<comment type="similarity">
    <text evidence="1">Belongs to the UPF0250 family.</text>
</comment>
<proteinExistence type="inferred from homology"/>
<reference key="1">
    <citation type="submission" date="2008-02" db="EMBL/GenBank/DDBJ databases">
        <title>Complete sequence of Escherichia coli C str. ATCC 8739.</title>
        <authorList>
            <person name="Copeland A."/>
            <person name="Lucas S."/>
            <person name="Lapidus A."/>
            <person name="Glavina del Rio T."/>
            <person name="Dalin E."/>
            <person name="Tice H."/>
            <person name="Bruce D."/>
            <person name="Goodwin L."/>
            <person name="Pitluck S."/>
            <person name="Kiss H."/>
            <person name="Brettin T."/>
            <person name="Detter J.C."/>
            <person name="Han C."/>
            <person name="Kuske C.R."/>
            <person name="Schmutz J."/>
            <person name="Larimer F."/>
            <person name="Land M."/>
            <person name="Hauser L."/>
            <person name="Kyrpides N."/>
            <person name="Mikhailova N."/>
            <person name="Ingram L."/>
            <person name="Richardson P."/>
        </authorList>
    </citation>
    <scope>NUCLEOTIDE SEQUENCE [LARGE SCALE GENOMIC DNA]</scope>
    <source>
        <strain>ATCC 8739 / DSM 1576 / NBRC 3972 / NCIMB 8545 / WDCM 00012 / Crooks</strain>
    </source>
</reference>
<protein>
    <recommendedName>
        <fullName evidence="1">UPF0250 protein YbeD</fullName>
    </recommendedName>
</protein>
<gene>
    <name evidence="1" type="primary">ybeD</name>
    <name type="ordered locus">EcolC_3014</name>
</gene>
<name>YBED_ECOLC</name>
<organism>
    <name type="scientific">Escherichia coli (strain ATCC 8739 / DSM 1576 / NBRC 3972 / NCIMB 8545 / WDCM 00012 / Crooks)</name>
    <dbReference type="NCBI Taxonomy" id="481805"/>
    <lineage>
        <taxon>Bacteria</taxon>
        <taxon>Pseudomonadati</taxon>
        <taxon>Pseudomonadota</taxon>
        <taxon>Gammaproteobacteria</taxon>
        <taxon>Enterobacterales</taxon>
        <taxon>Enterobacteriaceae</taxon>
        <taxon>Escherichia</taxon>
    </lineage>
</organism>